<name>RS16_HAMD5</name>
<sequence length="86" mass="9819">MVKIRLARHGSKKRPFYQIVVSDSRNARDGRFLENVGFFNPVASGKAEKLRLNIDRIEHWKNVGAELSERVQALVKAEKKNLQTAS</sequence>
<reference key="1">
    <citation type="journal article" date="2009" name="Proc. Natl. Acad. Sci. U.S.A.">
        <title>Hamiltonella defensa, genome evolution of protective bacterial endosymbiont from pathogenic ancestors.</title>
        <authorList>
            <person name="Degnan P.H."/>
            <person name="Yu Y."/>
            <person name="Sisneros N."/>
            <person name="Wing R.A."/>
            <person name="Moran N.A."/>
        </authorList>
    </citation>
    <scope>NUCLEOTIDE SEQUENCE [LARGE SCALE GENOMIC DNA]</scope>
    <source>
        <strain>5AT</strain>
    </source>
</reference>
<protein>
    <recommendedName>
        <fullName evidence="1">Small ribosomal subunit protein bS16</fullName>
    </recommendedName>
    <alternativeName>
        <fullName evidence="2">30S ribosomal protein S16</fullName>
    </alternativeName>
</protein>
<gene>
    <name evidence="1" type="primary">rpsP</name>
    <name type="ordered locus">HDEF_2326</name>
</gene>
<organism>
    <name type="scientific">Hamiltonella defensa subsp. Acyrthosiphon pisum (strain 5AT)</name>
    <dbReference type="NCBI Taxonomy" id="572265"/>
    <lineage>
        <taxon>Bacteria</taxon>
        <taxon>Pseudomonadati</taxon>
        <taxon>Pseudomonadota</taxon>
        <taxon>Gammaproteobacteria</taxon>
        <taxon>Enterobacterales</taxon>
        <taxon>Enterobacteriaceae</taxon>
        <taxon>aphid secondary symbionts</taxon>
        <taxon>Candidatus Hamiltonella</taxon>
    </lineage>
</organism>
<keyword id="KW-0687">Ribonucleoprotein</keyword>
<keyword id="KW-0689">Ribosomal protein</keyword>
<comment type="similarity">
    <text evidence="1">Belongs to the bacterial ribosomal protein bS16 family.</text>
</comment>
<evidence type="ECO:0000255" key="1">
    <source>
        <dbReference type="HAMAP-Rule" id="MF_00385"/>
    </source>
</evidence>
<evidence type="ECO:0000305" key="2"/>
<feature type="chain" id="PRO_1000205764" description="Small ribosomal subunit protein bS16">
    <location>
        <begin position="1"/>
        <end position="86"/>
    </location>
</feature>
<dbReference type="EMBL" id="CP001277">
    <property type="protein sequence ID" value="ACQ68863.1"/>
    <property type="molecule type" value="Genomic_DNA"/>
</dbReference>
<dbReference type="RefSeq" id="WP_015874582.1">
    <property type="nucleotide sequence ID" value="NC_012751.1"/>
</dbReference>
<dbReference type="SMR" id="C4K8Z4"/>
<dbReference type="STRING" id="572265.HDEF_2326"/>
<dbReference type="GeneID" id="66261815"/>
<dbReference type="KEGG" id="hde:HDEF_2326"/>
<dbReference type="eggNOG" id="COG0228">
    <property type="taxonomic scope" value="Bacteria"/>
</dbReference>
<dbReference type="HOGENOM" id="CLU_100590_5_1_6"/>
<dbReference type="Proteomes" id="UP000002334">
    <property type="component" value="Chromosome"/>
</dbReference>
<dbReference type="GO" id="GO:0005737">
    <property type="term" value="C:cytoplasm"/>
    <property type="evidence" value="ECO:0007669"/>
    <property type="project" value="UniProtKB-ARBA"/>
</dbReference>
<dbReference type="GO" id="GO:0015935">
    <property type="term" value="C:small ribosomal subunit"/>
    <property type="evidence" value="ECO:0007669"/>
    <property type="project" value="TreeGrafter"/>
</dbReference>
<dbReference type="GO" id="GO:0003735">
    <property type="term" value="F:structural constituent of ribosome"/>
    <property type="evidence" value="ECO:0007669"/>
    <property type="project" value="InterPro"/>
</dbReference>
<dbReference type="GO" id="GO:0006412">
    <property type="term" value="P:translation"/>
    <property type="evidence" value="ECO:0007669"/>
    <property type="project" value="UniProtKB-UniRule"/>
</dbReference>
<dbReference type="FunFam" id="3.30.1320.10:FF:000001">
    <property type="entry name" value="30S ribosomal protein S16"/>
    <property type="match status" value="1"/>
</dbReference>
<dbReference type="Gene3D" id="3.30.1320.10">
    <property type="match status" value="1"/>
</dbReference>
<dbReference type="HAMAP" id="MF_00385">
    <property type="entry name" value="Ribosomal_bS16"/>
    <property type="match status" value="1"/>
</dbReference>
<dbReference type="InterPro" id="IPR000307">
    <property type="entry name" value="Ribosomal_bS16"/>
</dbReference>
<dbReference type="InterPro" id="IPR023803">
    <property type="entry name" value="Ribosomal_bS16_dom_sf"/>
</dbReference>
<dbReference type="NCBIfam" id="TIGR00002">
    <property type="entry name" value="S16"/>
    <property type="match status" value="1"/>
</dbReference>
<dbReference type="PANTHER" id="PTHR12919">
    <property type="entry name" value="30S RIBOSOMAL PROTEIN S16"/>
    <property type="match status" value="1"/>
</dbReference>
<dbReference type="PANTHER" id="PTHR12919:SF20">
    <property type="entry name" value="SMALL RIBOSOMAL SUBUNIT PROTEIN BS16M"/>
    <property type="match status" value="1"/>
</dbReference>
<dbReference type="Pfam" id="PF00886">
    <property type="entry name" value="Ribosomal_S16"/>
    <property type="match status" value="1"/>
</dbReference>
<dbReference type="SUPFAM" id="SSF54565">
    <property type="entry name" value="Ribosomal protein S16"/>
    <property type="match status" value="1"/>
</dbReference>
<proteinExistence type="inferred from homology"/>
<accession>C4K8Z4</accession>